<accession>Q54RB2</accession>
<proteinExistence type="inferred from homology"/>
<name>CDK11_DICDI</name>
<feature type="chain" id="PRO_0000353101" description="Cyclin-dependent kinase 11">
    <location>
        <begin position="1"/>
        <end position="358"/>
    </location>
</feature>
<feature type="domain" description="Protein kinase" evidence="1">
    <location>
        <begin position="52"/>
        <end position="336"/>
    </location>
</feature>
<feature type="active site" description="Proton acceptor" evidence="1 2">
    <location>
        <position position="176"/>
    </location>
</feature>
<feature type="binding site" evidence="1">
    <location>
        <begin position="58"/>
        <end position="66"/>
    </location>
    <ligand>
        <name>ATP</name>
        <dbReference type="ChEBI" id="CHEBI:30616"/>
    </ligand>
</feature>
<feature type="binding site" evidence="1">
    <location>
        <position position="81"/>
    </location>
    <ligand>
        <name>ATP</name>
        <dbReference type="ChEBI" id="CHEBI:30616"/>
    </ligand>
</feature>
<evidence type="ECO:0000255" key="1">
    <source>
        <dbReference type="PROSITE-ProRule" id="PRU00159"/>
    </source>
</evidence>
<evidence type="ECO:0000255" key="2">
    <source>
        <dbReference type="PROSITE-ProRule" id="PRU10027"/>
    </source>
</evidence>
<evidence type="ECO:0000305" key="3"/>
<sequence>MSNIQENENKETCNIKENENKEILKENFKNKEKQYFSSLRSPYSACRSVDCFKKLYTINEGAFGVVYCAQDKETEEIVALKKIKMEREREGIPITSVREIKVLMELKHDNIVQIKEIVLGKNINSIFMAMEFIDHDLRGLMEVIKKPFLPSEIKTLIQQLLNGVSYMHDNWVIHRDLKTANLLYTNKGVLKIADFGLAREYGSPLKPLSKGVVTLWYRAPELLLDTEIYTPAIDIWSVGCIFAEIISKEVLLQGSSEIDQMDKIFKLFGTPTEKSWPAFFKLPLAKYFNLTDQPYNNLKSKFPHITDNAFDLLNKLLELNPEARISASDALKHPYFFENPQPRDPLLMPTWPSSHKKT</sequence>
<comment type="catalytic activity">
    <reaction>
        <text>L-seryl-[protein] + ATP = O-phospho-L-seryl-[protein] + ADP + H(+)</text>
        <dbReference type="Rhea" id="RHEA:17989"/>
        <dbReference type="Rhea" id="RHEA-COMP:9863"/>
        <dbReference type="Rhea" id="RHEA-COMP:11604"/>
        <dbReference type="ChEBI" id="CHEBI:15378"/>
        <dbReference type="ChEBI" id="CHEBI:29999"/>
        <dbReference type="ChEBI" id="CHEBI:30616"/>
        <dbReference type="ChEBI" id="CHEBI:83421"/>
        <dbReference type="ChEBI" id="CHEBI:456216"/>
        <dbReference type="EC" id="2.7.11.22"/>
    </reaction>
</comment>
<comment type="catalytic activity">
    <reaction>
        <text>L-threonyl-[protein] + ATP = O-phospho-L-threonyl-[protein] + ADP + H(+)</text>
        <dbReference type="Rhea" id="RHEA:46608"/>
        <dbReference type="Rhea" id="RHEA-COMP:11060"/>
        <dbReference type="Rhea" id="RHEA-COMP:11605"/>
        <dbReference type="ChEBI" id="CHEBI:15378"/>
        <dbReference type="ChEBI" id="CHEBI:30013"/>
        <dbReference type="ChEBI" id="CHEBI:30616"/>
        <dbReference type="ChEBI" id="CHEBI:61977"/>
        <dbReference type="ChEBI" id="CHEBI:456216"/>
        <dbReference type="EC" id="2.7.11.22"/>
    </reaction>
</comment>
<comment type="similarity">
    <text evidence="3">Belongs to the protein kinase superfamily. CMGC Ser/Thr protein kinase family. CDC2/CDKX subfamily.</text>
</comment>
<organism>
    <name type="scientific">Dictyostelium discoideum</name>
    <name type="common">Social amoeba</name>
    <dbReference type="NCBI Taxonomy" id="44689"/>
    <lineage>
        <taxon>Eukaryota</taxon>
        <taxon>Amoebozoa</taxon>
        <taxon>Evosea</taxon>
        <taxon>Eumycetozoa</taxon>
        <taxon>Dictyostelia</taxon>
        <taxon>Dictyosteliales</taxon>
        <taxon>Dictyosteliaceae</taxon>
        <taxon>Dictyostelium</taxon>
    </lineage>
</organism>
<dbReference type="EC" id="2.7.11.22"/>
<dbReference type="EMBL" id="AAFI02000052">
    <property type="protein sequence ID" value="EAL65780.1"/>
    <property type="molecule type" value="Genomic_DNA"/>
</dbReference>
<dbReference type="RefSeq" id="XP_639135.1">
    <property type="nucleotide sequence ID" value="XM_634043.1"/>
</dbReference>
<dbReference type="SMR" id="Q54RB2"/>
<dbReference type="FunCoup" id="Q54RB2">
    <property type="interactions" value="46"/>
</dbReference>
<dbReference type="STRING" id="44689.Q54RB2"/>
<dbReference type="PaxDb" id="44689-DDB0216376"/>
<dbReference type="EnsemblProtists" id="EAL65780">
    <property type="protein sequence ID" value="EAL65780"/>
    <property type="gene ID" value="DDB_G0283279"/>
</dbReference>
<dbReference type="GeneID" id="8624005"/>
<dbReference type="KEGG" id="ddi:DDB_G0283279"/>
<dbReference type="dictyBase" id="DDB_G0283279">
    <property type="gene designation" value="cdk11"/>
</dbReference>
<dbReference type="VEuPathDB" id="AmoebaDB:DDB_G0283279"/>
<dbReference type="eggNOG" id="KOG0663">
    <property type="taxonomic scope" value="Eukaryota"/>
</dbReference>
<dbReference type="HOGENOM" id="CLU_000288_181_1_1"/>
<dbReference type="InParanoid" id="Q54RB2"/>
<dbReference type="OMA" id="WVARATN"/>
<dbReference type="PhylomeDB" id="Q54RB2"/>
<dbReference type="PRO" id="PR:Q54RB2"/>
<dbReference type="Proteomes" id="UP000002195">
    <property type="component" value="Chromosome 4"/>
</dbReference>
<dbReference type="GO" id="GO:0005634">
    <property type="term" value="C:nucleus"/>
    <property type="evidence" value="ECO:0000318"/>
    <property type="project" value="GO_Central"/>
</dbReference>
<dbReference type="GO" id="GO:0005524">
    <property type="term" value="F:ATP binding"/>
    <property type="evidence" value="ECO:0000250"/>
    <property type="project" value="dictyBase"/>
</dbReference>
<dbReference type="GO" id="GO:0004693">
    <property type="term" value="F:cyclin-dependent protein serine/threonine kinase activity"/>
    <property type="evidence" value="ECO:0007669"/>
    <property type="project" value="UniProtKB-EC"/>
</dbReference>
<dbReference type="GO" id="GO:0106310">
    <property type="term" value="F:protein serine kinase activity"/>
    <property type="evidence" value="ECO:0007669"/>
    <property type="project" value="RHEA"/>
</dbReference>
<dbReference type="GO" id="GO:0004674">
    <property type="term" value="F:protein serine/threonine kinase activity"/>
    <property type="evidence" value="ECO:0000250"/>
    <property type="project" value="dictyBase"/>
</dbReference>
<dbReference type="GO" id="GO:0006468">
    <property type="term" value="P:protein phosphorylation"/>
    <property type="evidence" value="ECO:0000250"/>
    <property type="project" value="dictyBase"/>
</dbReference>
<dbReference type="GO" id="GO:0051726">
    <property type="term" value="P:regulation of cell cycle"/>
    <property type="evidence" value="ECO:0000318"/>
    <property type="project" value="GO_Central"/>
</dbReference>
<dbReference type="CDD" id="cd07843">
    <property type="entry name" value="STKc_CDC2L1"/>
    <property type="match status" value="1"/>
</dbReference>
<dbReference type="FunFam" id="1.10.510.10:FF:000533">
    <property type="entry name" value="cyclin-dependent kinase 10"/>
    <property type="match status" value="1"/>
</dbReference>
<dbReference type="FunFam" id="3.30.200.20:FF:000054">
    <property type="entry name" value="Cyclin-dependent kinase 11B"/>
    <property type="match status" value="1"/>
</dbReference>
<dbReference type="Gene3D" id="3.30.200.20">
    <property type="entry name" value="Phosphorylase Kinase, domain 1"/>
    <property type="match status" value="1"/>
</dbReference>
<dbReference type="Gene3D" id="1.10.510.10">
    <property type="entry name" value="Transferase(Phosphotransferase) domain 1"/>
    <property type="match status" value="1"/>
</dbReference>
<dbReference type="InterPro" id="IPR050108">
    <property type="entry name" value="CDK"/>
</dbReference>
<dbReference type="InterPro" id="IPR045267">
    <property type="entry name" value="CDK11/PITSLRE_STKc"/>
</dbReference>
<dbReference type="InterPro" id="IPR011009">
    <property type="entry name" value="Kinase-like_dom_sf"/>
</dbReference>
<dbReference type="InterPro" id="IPR000719">
    <property type="entry name" value="Prot_kinase_dom"/>
</dbReference>
<dbReference type="InterPro" id="IPR008271">
    <property type="entry name" value="Ser/Thr_kinase_AS"/>
</dbReference>
<dbReference type="PANTHER" id="PTHR24056">
    <property type="entry name" value="CELL DIVISION PROTEIN KINASE"/>
    <property type="match status" value="1"/>
</dbReference>
<dbReference type="PANTHER" id="PTHR24056:SF556">
    <property type="entry name" value="CYCLIN-DEPENDENT KINASE 11"/>
    <property type="match status" value="1"/>
</dbReference>
<dbReference type="Pfam" id="PF00069">
    <property type="entry name" value="Pkinase"/>
    <property type="match status" value="1"/>
</dbReference>
<dbReference type="SMART" id="SM00220">
    <property type="entry name" value="S_TKc"/>
    <property type="match status" value="1"/>
</dbReference>
<dbReference type="SUPFAM" id="SSF56112">
    <property type="entry name" value="Protein kinase-like (PK-like)"/>
    <property type="match status" value="1"/>
</dbReference>
<dbReference type="PROSITE" id="PS50011">
    <property type="entry name" value="PROTEIN_KINASE_DOM"/>
    <property type="match status" value="1"/>
</dbReference>
<dbReference type="PROSITE" id="PS00108">
    <property type="entry name" value="PROTEIN_KINASE_ST"/>
    <property type="match status" value="1"/>
</dbReference>
<reference key="1">
    <citation type="journal article" date="2005" name="Nature">
        <title>The genome of the social amoeba Dictyostelium discoideum.</title>
        <authorList>
            <person name="Eichinger L."/>
            <person name="Pachebat J.A."/>
            <person name="Gloeckner G."/>
            <person name="Rajandream M.A."/>
            <person name="Sucgang R."/>
            <person name="Berriman M."/>
            <person name="Song J."/>
            <person name="Olsen R."/>
            <person name="Szafranski K."/>
            <person name="Xu Q."/>
            <person name="Tunggal B."/>
            <person name="Kummerfeld S."/>
            <person name="Madera M."/>
            <person name="Konfortov B.A."/>
            <person name="Rivero F."/>
            <person name="Bankier A.T."/>
            <person name="Lehmann R."/>
            <person name="Hamlin N."/>
            <person name="Davies R."/>
            <person name="Gaudet P."/>
            <person name="Fey P."/>
            <person name="Pilcher K."/>
            <person name="Chen G."/>
            <person name="Saunders D."/>
            <person name="Sodergren E.J."/>
            <person name="Davis P."/>
            <person name="Kerhornou A."/>
            <person name="Nie X."/>
            <person name="Hall N."/>
            <person name="Anjard C."/>
            <person name="Hemphill L."/>
            <person name="Bason N."/>
            <person name="Farbrother P."/>
            <person name="Desany B."/>
            <person name="Just E."/>
            <person name="Morio T."/>
            <person name="Rost R."/>
            <person name="Churcher C.M."/>
            <person name="Cooper J."/>
            <person name="Haydock S."/>
            <person name="van Driessche N."/>
            <person name="Cronin A."/>
            <person name="Goodhead I."/>
            <person name="Muzny D.M."/>
            <person name="Mourier T."/>
            <person name="Pain A."/>
            <person name="Lu M."/>
            <person name="Harper D."/>
            <person name="Lindsay R."/>
            <person name="Hauser H."/>
            <person name="James K.D."/>
            <person name="Quiles M."/>
            <person name="Madan Babu M."/>
            <person name="Saito T."/>
            <person name="Buchrieser C."/>
            <person name="Wardroper A."/>
            <person name="Felder M."/>
            <person name="Thangavelu M."/>
            <person name="Johnson D."/>
            <person name="Knights A."/>
            <person name="Loulseged H."/>
            <person name="Mungall K.L."/>
            <person name="Oliver K."/>
            <person name="Price C."/>
            <person name="Quail M.A."/>
            <person name="Urushihara H."/>
            <person name="Hernandez J."/>
            <person name="Rabbinowitsch E."/>
            <person name="Steffen D."/>
            <person name="Sanders M."/>
            <person name="Ma J."/>
            <person name="Kohara Y."/>
            <person name="Sharp S."/>
            <person name="Simmonds M.N."/>
            <person name="Spiegler S."/>
            <person name="Tivey A."/>
            <person name="Sugano S."/>
            <person name="White B."/>
            <person name="Walker D."/>
            <person name="Woodward J.R."/>
            <person name="Winckler T."/>
            <person name="Tanaka Y."/>
            <person name="Shaulsky G."/>
            <person name="Schleicher M."/>
            <person name="Weinstock G.M."/>
            <person name="Rosenthal A."/>
            <person name="Cox E.C."/>
            <person name="Chisholm R.L."/>
            <person name="Gibbs R.A."/>
            <person name="Loomis W.F."/>
            <person name="Platzer M."/>
            <person name="Kay R.R."/>
            <person name="Williams J.G."/>
            <person name="Dear P.H."/>
            <person name="Noegel A.A."/>
            <person name="Barrell B.G."/>
            <person name="Kuspa A."/>
        </authorList>
    </citation>
    <scope>NUCLEOTIDE SEQUENCE [LARGE SCALE GENOMIC DNA]</scope>
    <source>
        <strain>AX4</strain>
    </source>
</reference>
<protein>
    <recommendedName>
        <fullName>Cyclin-dependent kinase 11</fullName>
        <ecNumber>2.7.11.22</ecNumber>
    </recommendedName>
    <alternativeName>
        <fullName>Cell division cycle protein kinase 11</fullName>
    </alternativeName>
    <alternativeName>
        <fullName>Cell division protein kinase 11</fullName>
    </alternativeName>
    <alternativeName>
        <fullName>PITSVRE serine/threonine protein-kinase cdk11</fullName>
    </alternativeName>
</protein>
<keyword id="KW-0067">ATP-binding</keyword>
<keyword id="KW-0418">Kinase</keyword>
<keyword id="KW-0547">Nucleotide-binding</keyword>
<keyword id="KW-1185">Reference proteome</keyword>
<keyword id="KW-0723">Serine/threonine-protein kinase</keyword>
<keyword id="KW-0808">Transferase</keyword>
<gene>
    <name type="primary">cdk11</name>
    <name type="ORF">DDB_G0283279</name>
</gene>